<sequence>MTPSIPVVVAGALGRMGAEVIKAVVGSADCMLVGAIDNTPGKEGSDIGLELGLGELEVAVTADFEGCLCAVSQSVRDAEAGAVLVDFTHPSVVYEHTRAAIAYGVHPVIGTTGLSPEQLSDLCQFAAKASIGGAVIPNFSVGMVLLQQAAAAAARFYDHAELTELHHNCKADAPSGTCIKTAELMEELGKSFNPAEVDEHESLAGSRGGRRESGLRLHSLRLPGLVAHQEVMFGAPGETYTLRHDTIDRSAYMPGVLLTVRKVRSLQTLVYGLERLI</sequence>
<protein>
    <recommendedName>
        <fullName evidence="1">4-hydroxy-tetrahydrodipicolinate reductase</fullName>
        <shortName evidence="1">HTPA reductase</shortName>
        <ecNumber evidence="1">1.17.1.8</ecNumber>
    </recommendedName>
</protein>
<feature type="chain" id="PRO_0000141500" description="4-hydroxy-tetrahydrodipicolinate reductase">
    <location>
        <begin position="1"/>
        <end position="277"/>
    </location>
</feature>
<feature type="active site" description="Proton donor/acceptor" evidence="1">
    <location>
        <position position="166"/>
    </location>
</feature>
<feature type="active site" description="Proton donor" evidence="1">
    <location>
        <position position="170"/>
    </location>
</feature>
<feature type="binding site" evidence="1">
    <location>
        <begin position="11"/>
        <end position="16"/>
    </location>
    <ligand>
        <name>NAD(+)</name>
        <dbReference type="ChEBI" id="CHEBI:57540"/>
    </ligand>
</feature>
<feature type="binding site" evidence="1">
    <location>
        <begin position="110"/>
        <end position="112"/>
    </location>
    <ligand>
        <name>NAD(+)</name>
        <dbReference type="ChEBI" id="CHEBI:57540"/>
    </ligand>
</feature>
<feature type="binding site" evidence="1">
    <location>
        <position position="167"/>
    </location>
    <ligand>
        <name>(S)-2,3,4,5-tetrahydrodipicolinate</name>
        <dbReference type="ChEBI" id="CHEBI:16845"/>
    </ligand>
</feature>
<feature type="binding site" evidence="1">
    <location>
        <begin position="176"/>
        <end position="177"/>
    </location>
    <ligand>
        <name>(S)-2,3,4,5-tetrahydrodipicolinate</name>
        <dbReference type="ChEBI" id="CHEBI:16845"/>
    </ligand>
</feature>
<gene>
    <name evidence="1" type="primary">dapB</name>
    <name type="ordered locus">SYNW0819</name>
</gene>
<reference key="1">
    <citation type="journal article" date="2003" name="Nature">
        <title>The genome of a motile marine Synechococcus.</title>
        <authorList>
            <person name="Palenik B."/>
            <person name="Brahamsha B."/>
            <person name="Larimer F.W."/>
            <person name="Land M.L."/>
            <person name="Hauser L."/>
            <person name="Chain P."/>
            <person name="Lamerdin J.E."/>
            <person name="Regala W."/>
            <person name="Allen E.E."/>
            <person name="McCarren J."/>
            <person name="Paulsen I.T."/>
            <person name="Dufresne A."/>
            <person name="Partensky F."/>
            <person name="Webb E.A."/>
            <person name="Waterbury J."/>
        </authorList>
    </citation>
    <scope>NUCLEOTIDE SEQUENCE [LARGE SCALE GENOMIC DNA]</scope>
    <source>
        <strain>WH8102</strain>
    </source>
</reference>
<name>DAPB_PARMW</name>
<comment type="function">
    <text evidence="1">Catalyzes the conversion of 4-hydroxy-tetrahydrodipicolinate (HTPA) to tetrahydrodipicolinate.</text>
</comment>
<comment type="catalytic activity">
    <reaction evidence="1">
        <text>(S)-2,3,4,5-tetrahydrodipicolinate + NAD(+) + H2O = (2S,4S)-4-hydroxy-2,3,4,5-tetrahydrodipicolinate + NADH + H(+)</text>
        <dbReference type="Rhea" id="RHEA:35323"/>
        <dbReference type="ChEBI" id="CHEBI:15377"/>
        <dbReference type="ChEBI" id="CHEBI:15378"/>
        <dbReference type="ChEBI" id="CHEBI:16845"/>
        <dbReference type="ChEBI" id="CHEBI:57540"/>
        <dbReference type="ChEBI" id="CHEBI:57945"/>
        <dbReference type="ChEBI" id="CHEBI:67139"/>
        <dbReference type="EC" id="1.17.1.8"/>
    </reaction>
</comment>
<comment type="catalytic activity">
    <reaction evidence="1">
        <text>(S)-2,3,4,5-tetrahydrodipicolinate + NADP(+) + H2O = (2S,4S)-4-hydroxy-2,3,4,5-tetrahydrodipicolinate + NADPH + H(+)</text>
        <dbReference type="Rhea" id="RHEA:35331"/>
        <dbReference type="ChEBI" id="CHEBI:15377"/>
        <dbReference type="ChEBI" id="CHEBI:15378"/>
        <dbReference type="ChEBI" id="CHEBI:16845"/>
        <dbReference type="ChEBI" id="CHEBI:57783"/>
        <dbReference type="ChEBI" id="CHEBI:58349"/>
        <dbReference type="ChEBI" id="CHEBI:67139"/>
        <dbReference type="EC" id="1.17.1.8"/>
    </reaction>
</comment>
<comment type="pathway">
    <text evidence="1">Amino-acid biosynthesis; L-lysine biosynthesis via DAP pathway; (S)-tetrahydrodipicolinate from L-aspartate: step 4/4.</text>
</comment>
<comment type="subcellular location">
    <subcellularLocation>
        <location evidence="1">Cytoplasm</location>
    </subcellularLocation>
</comment>
<comment type="similarity">
    <text evidence="1">Belongs to the DapB family.</text>
</comment>
<comment type="caution">
    <text evidence="2">Was originally thought to be a dihydrodipicolinate reductase (DHDPR), catalyzing the conversion of dihydrodipicolinate to tetrahydrodipicolinate. However, it was shown in E.coli that the substrate of the enzymatic reaction is not dihydrodipicolinate (DHDP) but in fact (2S,4S)-4-hydroxy-2,3,4,5-tetrahydrodipicolinic acid (HTPA), the product released by the DapA-catalyzed reaction.</text>
</comment>
<evidence type="ECO:0000255" key="1">
    <source>
        <dbReference type="HAMAP-Rule" id="MF_00102"/>
    </source>
</evidence>
<evidence type="ECO:0000305" key="2"/>
<organism>
    <name type="scientific">Parasynechococcus marenigrum (strain WH8102)</name>
    <dbReference type="NCBI Taxonomy" id="84588"/>
    <lineage>
        <taxon>Bacteria</taxon>
        <taxon>Bacillati</taxon>
        <taxon>Cyanobacteriota</taxon>
        <taxon>Cyanophyceae</taxon>
        <taxon>Synechococcales</taxon>
        <taxon>Prochlorococcaceae</taxon>
        <taxon>Parasynechococcus</taxon>
        <taxon>Parasynechococcus marenigrum</taxon>
    </lineage>
</organism>
<proteinExistence type="inferred from homology"/>
<keyword id="KW-0028">Amino-acid biosynthesis</keyword>
<keyword id="KW-0963">Cytoplasm</keyword>
<keyword id="KW-0220">Diaminopimelate biosynthesis</keyword>
<keyword id="KW-0457">Lysine biosynthesis</keyword>
<keyword id="KW-0520">NAD</keyword>
<keyword id="KW-0521">NADP</keyword>
<keyword id="KW-0560">Oxidoreductase</keyword>
<dbReference type="EC" id="1.17.1.8" evidence="1"/>
<dbReference type="EMBL" id="BX569691">
    <property type="protein sequence ID" value="CAE07334.1"/>
    <property type="molecule type" value="Genomic_DNA"/>
</dbReference>
<dbReference type="RefSeq" id="WP_011127684.1">
    <property type="nucleotide sequence ID" value="NC_005070.1"/>
</dbReference>
<dbReference type="SMR" id="Q7U807"/>
<dbReference type="STRING" id="84588.SYNW0819"/>
<dbReference type="KEGG" id="syw:SYNW0819"/>
<dbReference type="eggNOG" id="COG0289">
    <property type="taxonomic scope" value="Bacteria"/>
</dbReference>
<dbReference type="HOGENOM" id="CLU_047479_0_1_3"/>
<dbReference type="UniPathway" id="UPA00034">
    <property type="reaction ID" value="UER00018"/>
</dbReference>
<dbReference type="Proteomes" id="UP000001422">
    <property type="component" value="Chromosome"/>
</dbReference>
<dbReference type="GO" id="GO:0005829">
    <property type="term" value="C:cytosol"/>
    <property type="evidence" value="ECO:0007669"/>
    <property type="project" value="TreeGrafter"/>
</dbReference>
<dbReference type="GO" id="GO:0008839">
    <property type="term" value="F:4-hydroxy-tetrahydrodipicolinate reductase"/>
    <property type="evidence" value="ECO:0007669"/>
    <property type="project" value="UniProtKB-EC"/>
</dbReference>
<dbReference type="GO" id="GO:0051287">
    <property type="term" value="F:NAD binding"/>
    <property type="evidence" value="ECO:0007669"/>
    <property type="project" value="UniProtKB-UniRule"/>
</dbReference>
<dbReference type="GO" id="GO:0050661">
    <property type="term" value="F:NADP binding"/>
    <property type="evidence" value="ECO:0007669"/>
    <property type="project" value="UniProtKB-UniRule"/>
</dbReference>
<dbReference type="GO" id="GO:0016726">
    <property type="term" value="F:oxidoreductase activity, acting on CH or CH2 groups, NAD or NADP as acceptor"/>
    <property type="evidence" value="ECO:0007669"/>
    <property type="project" value="UniProtKB-UniRule"/>
</dbReference>
<dbReference type="GO" id="GO:0019877">
    <property type="term" value="P:diaminopimelate biosynthetic process"/>
    <property type="evidence" value="ECO:0007669"/>
    <property type="project" value="UniProtKB-UniRule"/>
</dbReference>
<dbReference type="GO" id="GO:0009089">
    <property type="term" value="P:lysine biosynthetic process via diaminopimelate"/>
    <property type="evidence" value="ECO:0007669"/>
    <property type="project" value="UniProtKB-UniRule"/>
</dbReference>
<dbReference type="CDD" id="cd02274">
    <property type="entry name" value="DHDPR_N"/>
    <property type="match status" value="1"/>
</dbReference>
<dbReference type="FunFam" id="3.30.360.10:FF:000009">
    <property type="entry name" value="4-hydroxy-tetrahydrodipicolinate reductase"/>
    <property type="match status" value="1"/>
</dbReference>
<dbReference type="Gene3D" id="3.30.360.10">
    <property type="entry name" value="Dihydrodipicolinate Reductase, domain 2"/>
    <property type="match status" value="1"/>
</dbReference>
<dbReference type="Gene3D" id="3.40.50.720">
    <property type="entry name" value="NAD(P)-binding Rossmann-like Domain"/>
    <property type="match status" value="1"/>
</dbReference>
<dbReference type="HAMAP" id="MF_00102">
    <property type="entry name" value="DapB"/>
    <property type="match status" value="1"/>
</dbReference>
<dbReference type="InterPro" id="IPR022663">
    <property type="entry name" value="DapB_C"/>
</dbReference>
<dbReference type="InterPro" id="IPR000846">
    <property type="entry name" value="DapB_N"/>
</dbReference>
<dbReference type="InterPro" id="IPR022664">
    <property type="entry name" value="DapB_N_CS"/>
</dbReference>
<dbReference type="InterPro" id="IPR023940">
    <property type="entry name" value="DHDPR_bac"/>
</dbReference>
<dbReference type="InterPro" id="IPR036291">
    <property type="entry name" value="NAD(P)-bd_dom_sf"/>
</dbReference>
<dbReference type="NCBIfam" id="TIGR00036">
    <property type="entry name" value="dapB"/>
    <property type="match status" value="1"/>
</dbReference>
<dbReference type="PANTHER" id="PTHR20836:SF0">
    <property type="entry name" value="4-HYDROXY-TETRAHYDRODIPICOLINATE REDUCTASE 1, CHLOROPLASTIC-RELATED"/>
    <property type="match status" value="1"/>
</dbReference>
<dbReference type="PANTHER" id="PTHR20836">
    <property type="entry name" value="DIHYDRODIPICOLINATE REDUCTASE"/>
    <property type="match status" value="1"/>
</dbReference>
<dbReference type="Pfam" id="PF05173">
    <property type="entry name" value="DapB_C"/>
    <property type="match status" value="1"/>
</dbReference>
<dbReference type="Pfam" id="PF01113">
    <property type="entry name" value="DapB_N"/>
    <property type="match status" value="1"/>
</dbReference>
<dbReference type="PIRSF" id="PIRSF000161">
    <property type="entry name" value="DHPR"/>
    <property type="match status" value="1"/>
</dbReference>
<dbReference type="SUPFAM" id="SSF55347">
    <property type="entry name" value="Glyceraldehyde-3-phosphate dehydrogenase-like, C-terminal domain"/>
    <property type="match status" value="1"/>
</dbReference>
<dbReference type="SUPFAM" id="SSF51735">
    <property type="entry name" value="NAD(P)-binding Rossmann-fold domains"/>
    <property type="match status" value="1"/>
</dbReference>
<dbReference type="PROSITE" id="PS01298">
    <property type="entry name" value="DAPB"/>
    <property type="match status" value="1"/>
</dbReference>
<accession>Q7U807</accession>